<dbReference type="EC" id="1.2.1.41" evidence="1"/>
<dbReference type="EMBL" id="CP000240">
    <property type="protein sequence ID" value="ABD01804.1"/>
    <property type="molecule type" value="Genomic_DNA"/>
</dbReference>
<dbReference type="RefSeq" id="WP_011432461.1">
    <property type="nucleotide sequence ID" value="NC_007776.1"/>
</dbReference>
<dbReference type="SMR" id="Q2JN71"/>
<dbReference type="STRING" id="321332.CYB_0823"/>
<dbReference type="KEGG" id="cyb:CYB_0823"/>
<dbReference type="eggNOG" id="COG0014">
    <property type="taxonomic scope" value="Bacteria"/>
</dbReference>
<dbReference type="HOGENOM" id="CLU_030231_0_1_3"/>
<dbReference type="OrthoDB" id="9809970at2"/>
<dbReference type="UniPathway" id="UPA00098">
    <property type="reaction ID" value="UER00360"/>
</dbReference>
<dbReference type="Proteomes" id="UP000001938">
    <property type="component" value="Chromosome"/>
</dbReference>
<dbReference type="GO" id="GO:0005737">
    <property type="term" value="C:cytoplasm"/>
    <property type="evidence" value="ECO:0007669"/>
    <property type="project" value="UniProtKB-SubCell"/>
</dbReference>
<dbReference type="GO" id="GO:0004350">
    <property type="term" value="F:glutamate-5-semialdehyde dehydrogenase activity"/>
    <property type="evidence" value="ECO:0007669"/>
    <property type="project" value="UniProtKB-UniRule"/>
</dbReference>
<dbReference type="GO" id="GO:0050661">
    <property type="term" value="F:NADP binding"/>
    <property type="evidence" value="ECO:0007669"/>
    <property type="project" value="InterPro"/>
</dbReference>
<dbReference type="GO" id="GO:0055129">
    <property type="term" value="P:L-proline biosynthetic process"/>
    <property type="evidence" value="ECO:0007669"/>
    <property type="project" value="UniProtKB-UniRule"/>
</dbReference>
<dbReference type="CDD" id="cd07079">
    <property type="entry name" value="ALDH_F18-19_ProA-GPR"/>
    <property type="match status" value="1"/>
</dbReference>
<dbReference type="FunFam" id="3.40.309.10:FF:000006">
    <property type="entry name" value="Gamma-glutamyl phosphate reductase"/>
    <property type="match status" value="1"/>
</dbReference>
<dbReference type="Gene3D" id="3.40.605.10">
    <property type="entry name" value="Aldehyde Dehydrogenase, Chain A, domain 1"/>
    <property type="match status" value="1"/>
</dbReference>
<dbReference type="Gene3D" id="3.40.309.10">
    <property type="entry name" value="Aldehyde Dehydrogenase, Chain A, domain 2"/>
    <property type="match status" value="1"/>
</dbReference>
<dbReference type="HAMAP" id="MF_00412">
    <property type="entry name" value="ProA"/>
    <property type="match status" value="1"/>
</dbReference>
<dbReference type="InterPro" id="IPR016161">
    <property type="entry name" value="Ald_DH/histidinol_DH"/>
</dbReference>
<dbReference type="InterPro" id="IPR016163">
    <property type="entry name" value="Ald_DH_C"/>
</dbReference>
<dbReference type="InterPro" id="IPR016162">
    <property type="entry name" value="Ald_DH_N"/>
</dbReference>
<dbReference type="InterPro" id="IPR015590">
    <property type="entry name" value="Aldehyde_DH_dom"/>
</dbReference>
<dbReference type="InterPro" id="IPR020593">
    <property type="entry name" value="G-glutamylP_reductase_CS"/>
</dbReference>
<dbReference type="InterPro" id="IPR012134">
    <property type="entry name" value="Glu-5-SA_DH"/>
</dbReference>
<dbReference type="InterPro" id="IPR000965">
    <property type="entry name" value="GPR_dom"/>
</dbReference>
<dbReference type="NCBIfam" id="NF001221">
    <property type="entry name" value="PRK00197.1"/>
    <property type="match status" value="1"/>
</dbReference>
<dbReference type="NCBIfam" id="TIGR00407">
    <property type="entry name" value="proA"/>
    <property type="match status" value="1"/>
</dbReference>
<dbReference type="PANTHER" id="PTHR11063:SF8">
    <property type="entry name" value="DELTA-1-PYRROLINE-5-CARBOXYLATE SYNTHASE"/>
    <property type="match status" value="1"/>
</dbReference>
<dbReference type="PANTHER" id="PTHR11063">
    <property type="entry name" value="GLUTAMATE SEMIALDEHYDE DEHYDROGENASE"/>
    <property type="match status" value="1"/>
</dbReference>
<dbReference type="Pfam" id="PF00171">
    <property type="entry name" value="Aldedh"/>
    <property type="match status" value="1"/>
</dbReference>
<dbReference type="PIRSF" id="PIRSF000151">
    <property type="entry name" value="GPR"/>
    <property type="match status" value="1"/>
</dbReference>
<dbReference type="SUPFAM" id="SSF53720">
    <property type="entry name" value="ALDH-like"/>
    <property type="match status" value="1"/>
</dbReference>
<dbReference type="PROSITE" id="PS01223">
    <property type="entry name" value="PROA"/>
    <property type="match status" value="1"/>
</dbReference>
<comment type="function">
    <text evidence="1">Catalyzes the NADPH-dependent reduction of L-glutamate 5-phosphate into L-glutamate 5-semialdehyde and phosphate. The product spontaneously undergoes cyclization to form 1-pyrroline-5-carboxylate.</text>
</comment>
<comment type="catalytic activity">
    <reaction evidence="1">
        <text>L-glutamate 5-semialdehyde + phosphate + NADP(+) = L-glutamyl 5-phosphate + NADPH + H(+)</text>
        <dbReference type="Rhea" id="RHEA:19541"/>
        <dbReference type="ChEBI" id="CHEBI:15378"/>
        <dbReference type="ChEBI" id="CHEBI:43474"/>
        <dbReference type="ChEBI" id="CHEBI:57783"/>
        <dbReference type="ChEBI" id="CHEBI:58066"/>
        <dbReference type="ChEBI" id="CHEBI:58274"/>
        <dbReference type="ChEBI" id="CHEBI:58349"/>
        <dbReference type="EC" id="1.2.1.41"/>
    </reaction>
</comment>
<comment type="pathway">
    <text evidence="1">Amino-acid biosynthesis; L-proline biosynthesis; L-glutamate 5-semialdehyde from L-glutamate: step 2/2.</text>
</comment>
<comment type="subcellular location">
    <subcellularLocation>
        <location evidence="1">Cytoplasm</location>
    </subcellularLocation>
</comment>
<comment type="similarity">
    <text evidence="1">Belongs to the gamma-glutamyl phosphate reductase family.</text>
</comment>
<reference key="1">
    <citation type="journal article" date="2007" name="ISME J.">
        <title>Population level functional diversity in a microbial community revealed by comparative genomic and metagenomic analyses.</title>
        <authorList>
            <person name="Bhaya D."/>
            <person name="Grossman A.R."/>
            <person name="Steunou A.-S."/>
            <person name="Khuri N."/>
            <person name="Cohan F.M."/>
            <person name="Hamamura N."/>
            <person name="Melendrez M.C."/>
            <person name="Bateson M.M."/>
            <person name="Ward D.M."/>
            <person name="Heidelberg J.F."/>
        </authorList>
    </citation>
    <scope>NUCLEOTIDE SEQUENCE [LARGE SCALE GENOMIC DNA]</scope>
    <source>
        <strain>JA-2-3B'a(2-13)</strain>
    </source>
</reference>
<sequence>MSLATDCPSSLASASERPLLSQVQLARAAAQHTATLPTAIKNAALEAMATALLEHQEPILAANRADLERAAEMVKAGELSASAYARLKLDAHKLADMVAGVRQVIRLGDPVGRALLIRELDEGLILERRTYPLGVLGVIFESRPDALVQIAALAVKTGNSVLLKGGSEALLSCQALMAAIQAGLQQIPEFPQGSLQLLTSRAEVKALLQLEGLVDLIIPRGSSSFVRYILENTRIPVLGHADGLCHLYVDRAADVDMAIKLTVDSKTQYPAACNAIETLLVHKAIAPHFLPLAVKALREKGVELRGDPLCRELVPDLIPATEDDWSTEYADLILSIKVVGSLDEAIAHIQQYGSRHTEAIVTEDAAAARRFLDEVDAAGVFHNASTRFADGFRYGFGAEVGISTQKLPPRGPVGLEGLVTYRYQLRGQGHLVADYTGPQARPFQHRDRLNNTGLA</sequence>
<protein>
    <recommendedName>
        <fullName evidence="1">Gamma-glutamyl phosphate reductase</fullName>
        <shortName evidence="1">GPR</shortName>
        <ecNumber evidence="1">1.2.1.41</ecNumber>
    </recommendedName>
    <alternativeName>
        <fullName evidence="1">Glutamate-5-semialdehyde dehydrogenase</fullName>
    </alternativeName>
    <alternativeName>
        <fullName evidence="1">Glutamyl-gamma-semialdehyde dehydrogenase</fullName>
        <shortName evidence="1">GSA dehydrogenase</shortName>
    </alternativeName>
</protein>
<name>PROA_SYNJB</name>
<proteinExistence type="inferred from homology"/>
<evidence type="ECO:0000255" key="1">
    <source>
        <dbReference type="HAMAP-Rule" id="MF_00412"/>
    </source>
</evidence>
<accession>Q2JN71</accession>
<organism>
    <name type="scientific">Synechococcus sp. (strain JA-2-3B'a(2-13))</name>
    <name type="common">Cyanobacteria bacterium Yellowstone B-Prime</name>
    <dbReference type="NCBI Taxonomy" id="321332"/>
    <lineage>
        <taxon>Bacteria</taxon>
        <taxon>Bacillati</taxon>
        <taxon>Cyanobacteriota</taxon>
        <taxon>Cyanophyceae</taxon>
        <taxon>Synechococcales</taxon>
        <taxon>Synechococcaceae</taxon>
        <taxon>Synechococcus</taxon>
    </lineage>
</organism>
<feature type="chain" id="PRO_0000252600" description="Gamma-glutamyl phosphate reductase">
    <location>
        <begin position="1"/>
        <end position="455"/>
    </location>
</feature>
<gene>
    <name evidence="1" type="primary">proA</name>
    <name type="ordered locus">CYB_0823</name>
</gene>
<keyword id="KW-0028">Amino-acid biosynthesis</keyword>
<keyword id="KW-0963">Cytoplasm</keyword>
<keyword id="KW-0521">NADP</keyword>
<keyword id="KW-0560">Oxidoreductase</keyword>
<keyword id="KW-0641">Proline biosynthesis</keyword>
<keyword id="KW-1185">Reference proteome</keyword>